<accession>B7MP71</accession>
<comment type="function">
    <text evidence="1">Part of the ecpRABCDE operon, which encodes the E.coli common pilus (ECP). ECP is found in both commensal and pathogenic strains and plays a dual role in early-stage biofilm development and host cell recognition. Positively regulates the expression of the ecp operon (By similarity).</text>
</comment>
<comment type="subcellular location">
    <subcellularLocation>
        <location evidence="3">Cytoplasm</location>
    </subcellularLocation>
</comment>
<comment type="induction">
    <text evidence="1">Negatively regulated by H-NS. Positively autoregulated. Also positively regulated by IHF (By similarity).</text>
</comment>
<comment type="similarity">
    <text evidence="3">Belongs to the EcpR/MatA family.</text>
</comment>
<dbReference type="EMBL" id="CU928162">
    <property type="protein sequence ID" value="CAR06543.1"/>
    <property type="molecule type" value="Genomic_DNA"/>
</dbReference>
<dbReference type="SMR" id="B7MP71"/>
<dbReference type="KEGG" id="ecq:ECED1_0332"/>
<dbReference type="HOGENOM" id="CLU_128111_0_0_6"/>
<dbReference type="Proteomes" id="UP000000748">
    <property type="component" value="Chromosome"/>
</dbReference>
<dbReference type="GO" id="GO:0005737">
    <property type="term" value="C:cytoplasm"/>
    <property type="evidence" value="ECO:0007669"/>
    <property type="project" value="UniProtKB-SubCell"/>
</dbReference>
<dbReference type="GO" id="GO:0003677">
    <property type="term" value="F:DNA binding"/>
    <property type="evidence" value="ECO:0007669"/>
    <property type="project" value="UniProtKB-KW"/>
</dbReference>
<dbReference type="GO" id="GO:0006355">
    <property type="term" value="P:regulation of DNA-templated transcription"/>
    <property type="evidence" value="ECO:0007669"/>
    <property type="project" value="InterPro"/>
</dbReference>
<dbReference type="CDD" id="cd06170">
    <property type="entry name" value="LuxR_C_like"/>
    <property type="match status" value="1"/>
</dbReference>
<dbReference type="Gene3D" id="1.10.10.10">
    <property type="entry name" value="Winged helix-like DNA-binding domain superfamily/Winged helix DNA-binding domain"/>
    <property type="match status" value="1"/>
</dbReference>
<dbReference type="InterPro" id="IPR016032">
    <property type="entry name" value="Sig_transdc_resp-reg_C-effctor"/>
</dbReference>
<dbReference type="InterPro" id="IPR000792">
    <property type="entry name" value="Tscrpt_reg_LuxR_C"/>
</dbReference>
<dbReference type="InterPro" id="IPR036388">
    <property type="entry name" value="WH-like_DNA-bd_sf"/>
</dbReference>
<dbReference type="Pfam" id="PF00196">
    <property type="entry name" value="GerE"/>
    <property type="match status" value="1"/>
</dbReference>
<dbReference type="PRINTS" id="PR00038">
    <property type="entry name" value="HTHLUXR"/>
</dbReference>
<dbReference type="SMART" id="SM00421">
    <property type="entry name" value="HTH_LUXR"/>
    <property type="match status" value="1"/>
</dbReference>
<dbReference type="SUPFAM" id="SSF46894">
    <property type="entry name" value="C-terminal effector domain of the bipartite response regulators"/>
    <property type="match status" value="1"/>
</dbReference>
<dbReference type="PROSITE" id="PS50043">
    <property type="entry name" value="HTH_LUXR_2"/>
    <property type="match status" value="1"/>
</dbReference>
<reference key="1">
    <citation type="journal article" date="2009" name="PLoS Genet.">
        <title>Organised genome dynamics in the Escherichia coli species results in highly diverse adaptive paths.</title>
        <authorList>
            <person name="Touchon M."/>
            <person name="Hoede C."/>
            <person name="Tenaillon O."/>
            <person name="Barbe V."/>
            <person name="Baeriswyl S."/>
            <person name="Bidet P."/>
            <person name="Bingen E."/>
            <person name="Bonacorsi S."/>
            <person name="Bouchier C."/>
            <person name="Bouvet O."/>
            <person name="Calteau A."/>
            <person name="Chiapello H."/>
            <person name="Clermont O."/>
            <person name="Cruveiller S."/>
            <person name="Danchin A."/>
            <person name="Diard M."/>
            <person name="Dossat C."/>
            <person name="Karoui M.E."/>
            <person name="Frapy E."/>
            <person name="Garry L."/>
            <person name="Ghigo J.M."/>
            <person name="Gilles A.M."/>
            <person name="Johnson J."/>
            <person name="Le Bouguenec C."/>
            <person name="Lescat M."/>
            <person name="Mangenot S."/>
            <person name="Martinez-Jehanne V."/>
            <person name="Matic I."/>
            <person name="Nassif X."/>
            <person name="Oztas S."/>
            <person name="Petit M.A."/>
            <person name="Pichon C."/>
            <person name="Rouy Z."/>
            <person name="Ruf C.S."/>
            <person name="Schneider D."/>
            <person name="Tourret J."/>
            <person name="Vacherie B."/>
            <person name="Vallenet D."/>
            <person name="Medigue C."/>
            <person name="Rocha E.P.C."/>
            <person name="Denamur E."/>
        </authorList>
    </citation>
    <scope>NUCLEOTIDE SEQUENCE [LARGE SCALE GENOMIC DNA]</scope>
    <source>
        <strain>ED1a</strain>
    </source>
</reference>
<keyword id="KW-0010">Activator</keyword>
<keyword id="KW-0963">Cytoplasm</keyword>
<keyword id="KW-0238">DNA-binding</keyword>
<keyword id="KW-0804">Transcription</keyword>
<keyword id="KW-0805">Transcription regulation</keyword>
<evidence type="ECO:0000250" key="1"/>
<evidence type="ECO:0000255" key="2">
    <source>
        <dbReference type="PROSITE-ProRule" id="PRU00411"/>
    </source>
</evidence>
<evidence type="ECO:0000305" key="3"/>
<name>ECPR_ECO81</name>
<sequence length="196" mass="23329">MTWQNDYSRDYEVKNHMECQNRSDKYIWSPHDAYFYKGLSELIVDIDRLIYLSLEKIRKDFVFINLNTDSLTEFINRDNEWLSAVKGKQVVLIAARKSEALANYWYYNSNIRGVVYAGLSRDIRKELAYVINGRFLRKDIKKDKITDREMEIIRMMAQGMLPKSIARIENCSVKTVYTHRRNAEAKLYSKLYKLVQ</sequence>
<feature type="chain" id="PRO_0000369185" description="HTH-type transcriptional regulator EcpR">
    <location>
        <begin position="1"/>
        <end position="196"/>
    </location>
</feature>
<feature type="domain" description="HTH luxR-type" evidence="2">
    <location>
        <begin position="138"/>
        <end position="196"/>
    </location>
</feature>
<feature type="DNA-binding region" description="H-T-H motif" evidence="2">
    <location>
        <begin position="162"/>
        <end position="181"/>
    </location>
</feature>
<protein>
    <recommendedName>
        <fullName>HTH-type transcriptional regulator EcpR</fullName>
    </recommendedName>
</protein>
<organism>
    <name type="scientific">Escherichia coli O81 (strain ED1a)</name>
    <dbReference type="NCBI Taxonomy" id="585397"/>
    <lineage>
        <taxon>Bacteria</taxon>
        <taxon>Pseudomonadati</taxon>
        <taxon>Pseudomonadota</taxon>
        <taxon>Gammaproteobacteria</taxon>
        <taxon>Enterobacterales</taxon>
        <taxon>Enterobacteriaceae</taxon>
        <taxon>Escherichia</taxon>
    </lineage>
</organism>
<gene>
    <name type="primary">ecpR</name>
    <name type="synonym">matA</name>
    <name type="ordered locus">ECED1_0332</name>
</gene>
<proteinExistence type="inferred from homology"/>